<proteinExistence type="evidence at transcript level"/>
<feature type="signal peptide" evidence="4">
    <location>
        <begin position="1"/>
        <end position="25"/>
    </location>
</feature>
<feature type="chain" id="PRO_0000273329" description="Phospholipase A1 member A" evidence="4">
    <location>
        <begin position="26"/>
        <end position="456"/>
    </location>
</feature>
<feature type="active site" description="Nucleophile" evidence="1">
    <location>
        <position position="166"/>
    </location>
</feature>
<feature type="active site" description="Charge relay system" evidence="5">
    <location>
        <position position="190"/>
    </location>
</feature>
<feature type="active site" description="Charge relay system" evidence="5">
    <location>
        <position position="260"/>
    </location>
</feature>
<feature type="glycosylation site" description="N-linked (GlcNAc...) asparagine" evidence="4">
    <location>
        <position position="34"/>
    </location>
</feature>
<feature type="disulfide bond" evidence="1">
    <location>
        <begin position="245"/>
        <end position="258"/>
    </location>
</feature>
<feature type="disulfide bond" evidence="1">
    <location>
        <begin position="282"/>
        <end position="293"/>
    </location>
</feature>
<feature type="disulfide bond" evidence="1">
    <location>
        <begin position="296"/>
        <end position="304"/>
    </location>
</feature>
<protein>
    <recommendedName>
        <fullName>Phospholipase A1 member A</fullName>
        <ecNumber evidence="2">3.1.1.111</ecNumber>
    </recommendedName>
</protein>
<keyword id="KW-1015">Disulfide bond</keyword>
<keyword id="KW-0325">Glycoprotein</keyword>
<keyword id="KW-0378">Hydrolase</keyword>
<keyword id="KW-0442">Lipid degradation</keyword>
<keyword id="KW-0443">Lipid metabolism</keyword>
<keyword id="KW-1185">Reference proteome</keyword>
<keyword id="KW-0964">Secreted</keyword>
<keyword id="KW-0732">Signal</keyword>
<name>PLA1A_BOVIN</name>
<comment type="function">
    <text evidence="2 3">Hydrolyzes the ester bond of the acyl group attached at the sn-1 position of phosphatidylserines (phospholipase A1 activity) and 1-acyl-2-lysophosphatidylserines (lysophospholipase activity) in the pathway of phosphatidylserines acyl chain remodeling (By similarity). Cleaves phosphatidylserines exposed on the outer leaflet of the plasma membrane of apoptotic cells producing 2-acyl-1-lysophosphatidylserines, which in turn enhance mast cell activation and histamine production. Has no activity toward other glycerophospholipids including phosphatidylcholines, phosphatidylethanolamines, phosphatidic acids or phosphatidylinositols, or glycerolipids such as triolein (By similarity).</text>
</comment>
<comment type="catalytic activity">
    <reaction evidence="2">
        <text>a 1,2-diacyl-sn-glycero-3-phospho-L-serine + H2O = a 2-acyl-sn-glycero-3-phospho-L-serine + a fatty acid + H(+)</text>
        <dbReference type="Rhea" id="RHEA:42212"/>
        <dbReference type="ChEBI" id="CHEBI:15377"/>
        <dbReference type="ChEBI" id="CHEBI:15378"/>
        <dbReference type="ChEBI" id="CHEBI:28868"/>
        <dbReference type="ChEBI" id="CHEBI:57262"/>
        <dbReference type="ChEBI" id="CHEBI:65214"/>
        <dbReference type="EC" id="3.1.1.111"/>
    </reaction>
    <physiologicalReaction direction="left-to-right" evidence="2">
        <dbReference type="Rhea" id="RHEA:42213"/>
    </physiologicalReaction>
</comment>
<comment type="catalytic activity">
    <reaction evidence="2">
        <text>1,2-di-(9Z)-octadecenoyl-sn-glycero-3-phospho-L-serine + H2O = 2-(9Z-octadecenoyl)-sn-glycero-3-phospho-L-serine + (9Z)-octadecenoate + H(+)</text>
        <dbReference type="Rhea" id="RHEA:40491"/>
        <dbReference type="ChEBI" id="CHEBI:15377"/>
        <dbReference type="ChEBI" id="CHEBI:15378"/>
        <dbReference type="ChEBI" id="CHEBI:30823"/>
        <dbReference type="ChEBI" id="CHEBI:74905"/>
        <dbReference type="ChEBI" id="CHEBI:77342"/>
    </reaction>
    <physiologicalReaction direction="left-to-right" evidence="2">
        <dbReference type="Rhea" id="RHEA:40492"/>
    </physiologicalReaction>
</comment>
<comment type="catalytic activity">
    <reaction evidence="2">
        <text>1-hexadecanoyl-2-(5Z,8Z,11Z,14Z-eicosatetraenoyl)-sn-glycero-3-phospho-L-serine + H2O = 2-(5Z,8Z,11Z,14Z)-eicosatetraenoyl-sn-glycero-3-phospho-L-serine + hexadecanoate + H(+)</text>
        <dbReference type="Rhea" id="RHEA:41187"/>
        <dbReference type="ChEBI" id="CHEBI:7896"/>
        <dbReference type="ChEBI" id="CHEBI:15377"/>
        <dbReference type="ChEBI" id="CHEBI:15378"/>
        <dbReference type="ChEBI" id="CHEBI:75032"/>
        <dbReference type="ChEBI" id="CHEBI:77830"/>
    </reaction>
    <physiologicalReaction direction="left-to-right" evidence="2">
        <dbReference type="Rhea" id="RHEA:41188"/>
    </physiologicalReaction>
</comment>
<comment type="catalytic activity">
    <reaction evidence="2">
        <text>a 1-acyl-sn-glycero-3-phospho-L-serine + H2O = sn-glycero-3-phospho-L-serine + a fatty acid + H(+)</text>
        <dbReference type="Rhea" id="RHEA:32979"/>
        <dbReference type="ChEBI" id="CHEBI:15377"/>
        <dbReference type="ChEBI" id="CHEBI:15378"/>
        <dbReference type="ChEBI" id="CHEBI:28868"/>
        <dbReference type="ChEBI" id="CHEBI:64379"/>
        <dbReference type="ChEBI" id="CHEBI:64765"/>
        <dbReference type="EC" id="3.1.1.111"/>
    </reaction>
    <physiologicalReaction direction="left-to-right" evidence="2">
        <dbReference type="Rhea" id="RHEA:32980"/>
    </physiologicalReaction>
</comment>
<comment type="catalytic activity">
    <reaction evidence="2">
        <text>1-(9Z-octadecenoyl)-sn-glycero-3-phospho-L-serine + H2O = sn-glycero-3-phospho-L-serine + (9Z)-octadecenoate + H(+)</text>
        <dbReference type="Rhea" id="RHEA:40499"/>
        <dbReference type="ChEBI" id="CHEBI:15377"/>
        <dbReference type="ChEBI" id="CHEBI:15378"/>
        <dbReference type="ChEBI" id="CHEBI:30823"/>
        <dbReference type="ChEBI" id="CHEBI:64765"/>
        <dbReference type="ChEBI" id="CHEBI:74617"/>
    </reaction>
    <physiologicalReaction direction="left-to-right" evidence="2">
        <dbReference type="Rhea" id="RHEA:40500"/>
    </physiologicalReaction>
</comment>
<comment type="subcellular location">
    <subcellularLocation>
        <location evidence="2">Secreted</location>
    </subcellularLocation>
</comment>
<comment type="similarity">
    <text evidence="6">Belongs to the AB hydrolase superfamily. Lipase family.</text>
</comment>
<accession>Q5E9H0</accession>
<gene>
    <name type="primary">PLA1A</name>
</gene>
<sequence>MPPDFWERCFWLWGLLLWLSVGSTGDAPPTPQTNCTDFQNANLLRGTNLKVQFLLFTPLDPSCGQLVEESSDIQNSGFNATLGTKLVIHGFRALGTKPSWIDRFIDALLRAADANVIAVDWVYGSTAAYFSAVENVIKLGLEISRFLRKLLALGVSESSIHIIGISLGAHVGGMVGHFYNGQLGQITGLDPAGPEYTRASLEERLDPGDALFVEAIHTDTDNLGIRIPVGHVDYFINGGQDQPGCPTSIYAGYSYLICDHMRAVHLYISALENSCPLVAFPCTNYKDFLAGQCLDCFNPFLLSCPRIGLVEQGGVKIEPLPKEVKVYLLTTSMAPYCVHHSLVEFHLQEPRNKDTCITVTFLSSSVTSSVKITIPRHQRVGKGVLAHPSPQCQINQVKLKLQASHRVWKKDQTTIIGRFCTAPLPVNDNKKMVCLPEPVNLQASETVSHDLKITCI</sequence>
<dbReference type="EC" id="3.1.1.111" evidence="2"/>
<dbReference type="EMBL" id="BT020950">
    <property type="protein sequence ID" value="AAX08967.1"/>
    <property type="molecule type" value="mRNA"/>
</dbReference>
<dbReference type="EMBL" id="BC112606">
    <property type="protein sequence ID" value="AAI12607.1"/>
    <property type="molecule type" value="mRNA"/>
</dbReference>
<dbReference type="RefSeq" id="NP_001015610.1">
    <property type="nucleotide sequence ID" value="NM_001015610.1"/>
</dbReference>
<dbReference type="SMR" id="Q5E9H0"/>
<dbReference type="FunCoup" id="Q5E9H0">
    <property type="interactions" value="367"/>
</dbReference>
<dbReference type="STRING" id="9913.ENSBTAP00000012361"/>
<dbReference type="ESTHER" id="bovin-q5e9h0">
    <property type="family name" value="Phospholipase"/>
</dbReference>
<dbReference type="GlyCosmos" id="Q5E9H0">
    <property type="glycosylation" value="1 site, No reported glycans"/>
</dbReference>
<dbReference type="GlyGen" id="Q5E9H0">
    <property type="glycosylation" value="1 site"/>
</dbReference>
<dbReference type="PaxDb" id="9913-ENSBTAP00000012361"/>
<dbReference type="GeneID" id="515900"/>
<dbReference type="KEGG" id="bta:515900"/>
<dbReference type="CTD" id="51365"/>
<dbReference type="eggNOG" id="ENOG502QQQP">
    <property type="taxonomic scope" value="Eukaryota"/>
</dbReference>
<dbReference type="HOGENOM" id="CLU_027171_3_1_1"/>
<dbReference type="InParanoid" id="Q5E9H0"/>
<dbReference type="OrthoDB" id="199913at2759"/>
<dbReference type="TreeFam" id="TF324997"/>
<dbReference type="Proteomes" id="UP000009136">
    <property type="component" value="Unplaced"/>
</dbReference>
<dbReference type="GO" id="GO:0005615">
    <property type="term" value="C:extracellular space"/>
    <property type="evidence" value="ECO:0000318"/>
    <property type="project" value="GO_Central"/>
</dbReference>
<dbReference type="GO" id="GO:0008970">
    <property type="term" value="F:phospholipase A1 activity"/>
    <property type="evidence" value="ECO:0000318"/>
    <property type="project" value="GO_Central"/>
</dbReference>
<dbReference type="GO" id="GO:0016042">
    <property type="term" value="P:lipid catabolic process"/>
    <property type="evidence" value="ECO:0000318"/>
    <property type="project" value="GO_Central"/>
</dbReference>
<dbReference type="CDD" id="cd00707">
    <property type="entry name" value="Pancreat_lipase_like"/>
    <property type="match status" value="1"/>
</dbReference>
<dbReference type="FunFam" id="3.40.50.1820:FF:000081">
    <property type="entry name" value="phospholipase A1 member A isoform X1"/>
    <property type="match status" value="1"/>
</dbReference>
<dbReference type="Gene3D" id="3.40.50.1820">
    <property type="entry name" value="alpha/beta hydrolase"/>
    <property type="match status" value="1"/>
</dbReference>
<dbReference type="InterPro" id="IPR029058">
    <property type="entry name" value="AB_hydrolase_fold"/>
</dbReference>
<dbReference type="InterPro" id="IPR013818">
    <property type="entry name" value="Lipase"/>
</dbReference>
<dbReference type="InterPro" id="IPR016272">
    <property type="entry name" value="Lipase_LIPH"/>
</dbReference>
<dbReference type="InterPro" id="IPR033906">
    <property type="entry name" value="Lipase_N"/>
</dbReference>
<dbReference type="InterPro" id="IPR000734">
    <property type="entry name" value="TAG_lipase"/>
</dbReference>
<dbReference type="PANTHER" id="PTHR11610">
    <property type="entry name" value="LIPASE"/>
    <property type="match status" value="1"/>
</dbReference>
<dbReference type="PANTHER" id="PTHR11610:SF111">
    <property type="entry name" value="PHOSPHOLIPASE A1 MEMBER A"/>
    <property type="match status" value="1"/>
</dbReference>
<dbReference type="Pfam" id="PF00151">
    <property type="entry name" value="Lipase"/>
    <property type="match status" value="1"/>
</dbReference>
<dbReference type="PIRSF" id="PIRSF000865">
    <property type="entry name" value="Lipoprotein_lipase_LIPH"/>
    <property type="match status" value="1"/>
</dbReference>
<dbReference type="PRINTS" id="PR00821">
    <property type="entry name" value="TAGLIPASE"/>
</dbReference>
<dbReference type="SUPFAM" id="SSF53474">
    <property type="entry name" value="alpha/beta-Hydrolases"/>
    <property type="match status" value="1"/>
</dbReference>
<evidence type="ECO:0000250" key="1"/>
<evidence type="ECO:0000250" key="2">
    <source>
        <dbReference type="UniProtKB" id="P97535"/>
    </source>
</evidence>
<evidence type="ECO:0000250" key="3">
    <source>
        <dbReference type="UniProtKB" id="Q53H76"/>
    </source>
</evidence>
<evidence type="ECO:0000255" key="4"/>
<evidence type="ECO:0000255" key="5">
    <source>
        <dbReference type="PROSITE-ProRule" id="PRU10037"/>
    </source>
</evidence>
<evidence type="ECO:0000305" key="6"/>
<reference key="1">
    <citation type="journal article" date="2005" name="BMC Genomics">
        <title>Characterization of 954 bovine full-CDS cDNA sequences.</title>
        <authorList>
            <person name="Harhay G.P."/>
            <person name="Sonstegard T.S."/>
            <person name="Keele J.W."/>
            <person name="Heaton M.P."/>
            <person name="Clawson M.L."/>
            <person name="Snelling W.M."/>
            <person name="Wiedmann R.T."/>
            <person name="Van Tassell C.P."/>
            <person name="Smith T.P.L."/>
        </authorList>
    </citation>
    <scope>NUCLEOTIDE SEQUENCE [LARGE SCALE MRNA]</scope>
</reference>
<reference key="2">
    <citation type="submission" date="2006-01" db="EMBL/GenBank/DDBJ databases">
        <authorList>
            <consortium name="NIH - Mammalian Gene Collection (MGC) project"/>
        </authorList>
    </citation>
    <scope>NUCLEOTIDE SEQUENCE [LARGE SCALE MRNA]</scope>
    <source>
        <strain>Hereford</strain>
        <tissue>Testis</tissue>
    </source>
</reference>
<organism>
    <name type="scientific">Bos taurus</name>
    <name type="common">Bovine</name>
    <dbReference type="NCBI Taxonomy" id="9913"/>
    <lineage>
        <taxon>Eukaryota</taxon>
        <taxon>Metazoa</taxon>
        <taxon>Chordata</taxon>
        <taxon>Craniata</taxon>
        <taxon>Vertebrata</taxon>
        <taxon>Euteleostomi</taxon>
        <taxon>Mammalia</taxon>
        <taxon>Eutheria</taxon>
        <taxon>Laurasiatheria</taxon>
        <taxon>Artiodactyla</taxon>
        <taxon>Ruminantia</taxon>
        <taxon>Pecora</taxon>
        <taxon>Bovidae</taxon>
        <taxon>Bovinae</taxon>
        <taxon>Bos</taxon>
    </lineage>
</organism>